<sequence length="548" mass="62117">MKHLHDLPAWSKLWNHFDDSKTLHMREMFEQDPQRAERYWLQVGGLTLDYSKNRINDETMSLLFELAREAGVPERMRQMFHGEKINTTENRAVLHVALRNRTNSPIMVDGEDVMPKVNRVLQRMGEFAHEVRSGSWLGYTNQVITDVVNIGIGGSDLGPLTMCTALKPFGHPRLNMHFVSNVDGSQLRDVLSKVHPETTLFIIASKTFTTQETLTNALTAREWFLNHAGDEEAVAKHFAAVSTNRKAVAEFGIDIANMFEFWDWVGGRYSLWSAIGLPIMLYLGEENFIEMLNGAHLMDQHFINTPLERNLPVILALIGIWYINYYGGGSHVIAPYDQHLHRLPKFIQQLDMESNGKQVTLDGKAVGHETSPIIWGETGINGQHAFFQLLHQGTHITPIDLIASLEKRSNLPGHHEILLANVFAQAEAFMCGKTPDEVRAELKAQGMDEARIEELVPHKTFSGNRPTNLILMDKVNPRNMGSLIAMYEHKTFVQGIIWGINSFDQWGVELGKQLAKTILGELTGETEPQKHDSSTERLINLYLQTNRK</sequence>
<name>G6PI1_NEIG1</name>
<comment type="function">
    <text evidence="1">Catalyzes the reversible isomerization of glucose-6-phosphate to fructose-6-phosphate.</text>
</comment>
<comment type="catalytic activity">
    <reaction evidence="1">
        <text>alpha-D-glucose 6-phosphate = beta-D-fructose 6-phosphate</text>
        <dbReference type="Rhea" id="RHEA:11816"/>
        <dbReference type="ChEBI" id="CHEBI:57634"/>
        <dbReference type="ChEBI" id="CHEBI:58225"/>
        <dbReference type="EC" id="5.3.1.9"/>
    </reaction>
</comment>
<comment type="pathway">
    <text evidence="1">Carbohydrate biosynthesis; gluconeogenesis.</text>
</comment>
<comment type="pathway">
    <text evidence="1">Carbohydrate degradation; glycolysis; D-glyceraldehyde 3-phosphate and glycerone phosphate from D-glucose: step 2/4.</text>
</comment>
<comment type="subcellular location">
    <subcellularLocation>
        <location evidence="1">Cytoplasm</location>
    </subcellularLocation>
</comment>
<comment type="similarity">
    <text evidence="1">Belongs to the GPI family.</text>
</comment>
<gene>
    <name evidence="1" type="primary">pgi1</name>
    <name type="ordered locus">NGO_0719</name>
</gene>
<accession>Q5F8P8</accession>
<keyword id="KW-0963">Cytoplasm</keyword>
<keyword id="KW-0312">Gluconeogenesis</keyword>
<keyword id="KW-0324">Glycolysis</keyword>
<keyword id="KW-0413">Isomerase</keyword>
<keyword id="KW-1185">Reference proteome</keyword>
<organism>
    <name type="scientific">Neisseria gonorrhoeae (strain ATCC 700825 / FA 1090)</name>
    <dbReference type="NCBI Taxonomy" id="242231"/>
    <lineage>
        <taxon>Bacteria</taxon>
        <taxon>Pseudomonadati</taxon>
        <taxon>Pseudomonadota</taxon>
        <taxon>Betaproteobacteria</taxon>
        <taxon>Neisseriales</taxon>
        <taxon>Neisseriaceae</taxon>
        <taxon>Neisseria</taxon>
    </lineage>
</organism>
<proteinExistence type="inferred from homology"/>
<feature type="chain" id="PRO_0000180689" description="Glucose-6-phosphate isomerase 1">
    <location>
        <begin position="1"/>
        <end position="548"/>
    </location>
</feature>
<feature type="active site" description="Proton donor" evidence="1">
    <location>
        <position position="353"/>
    </location>
</feature>
<feature type="active site" evidence="1">
    <location>
        <position position="384"/>
    </location>
</feature>
<feature type="active site" evidence="1">
    <location>
        <position position="512"/>
    </location>
</feature>
<dbReference type="EC" id="5.3.1.9" evidence="1"/>
<dbReference type="EMBL" id="AE004969">
    <property type="protein sequence ID" value="AAW89439.1"/>
    <property type="molecule type" value="Genomic_DNA"/>
</dbReference>
<dbReference type="RefSeq" id="YP_207851.1">
    <property type="nucleotide sequence ID" value="NC_002946.2"/>
</dbReference>
<dbReference type="SMR" id="Q5F8P8"/>
<dbReference type="STRING" id="242231.NGO_0719"/>
<dbReference type="KEGG" id="ngo:NGO_0719"/>
<dbReference type="PATRIC" id="fig|242231.10.peg.856"/>
<dbReference type="HOGENOM" id="CLU_017947_3_1_4"/>
<dbReference type="UniPathway" id="UPA00109">
    <property type="reaction ID" value="UER00181"/>
</dbReference>
<dbReference type="UniPathway" id="UPA00138"/>
<dbReference type="Proteomes" id="UP000000535">
    <property type="component" value="Chromosome"/>
</dbReference>
<dbReference type="GO" id="GO:0005829">
    <property type="term" value="C:cytosol"/>
    <property type="evidence" value="ECO:0007669"/>
    <property type="project" value="TreeGrafter"/>
</dbReference>
<dbReference type="GO" id="GO:0097367">
    <property type="term" value="F:carbohydrate derivative binding"/>
    <property type="evidence" value="ECO:0007669"/>
    <property type="project" value="InterPro"/>
</dbReference>
<dbReference type="GO" id="GO:0004347">
    <property type="term" value="F:glucose-6-phosphate isomerase activity"/>
    <property type="evidence" value="ECO:0007669"/>
    <property type="project" value="UniProtKB-UniRule"/>
</dbReference>
<dbReference type="GO" id="GO:0048029">
    <property type="term" value="F:monosaccharide binding"/>
    <property type="evidence" value="ECO:0007669"/>
    <property type="project" value="TreeGrafter"/>
</dbReference>
<dbReference type="GO" id="GO:0006094">
    <property type="term" value="P:gluconeogenesis"/>
    <property type="evidence" value="ECO:0007669"/>
    <property type="project" value="UniProtKB-UniRule"/>
</dbReference>
<dbReference type="GO" id="GO:0051156">
    <property type="term" value="P:glucose 6-phosphate metabolic process"/>
    <property type="evidence" value="ECO:0007669"/>
    <property type="project" value="TreeGrafter"/>
</dbReference>
<dbReference type="GO" id="GO:0006096">
    <property type="term" value="P:glycolytic process"/>
    <property type="evidence" value="ECO:0007669"/>
    <property type="project" value="UniProtKB-UniRule"/>
</dbReference>
<dbReference type="CDD" id="cd05015">
    <property type="entry name" value="SIS_PGI_1"/>
    <property type="match status" value="1"/>
</dbReference>
<dbReference type="CDD" id="cd05016">
    <property type="entry name" value="SIS_PGI_2"/>
    <property type="match status" value="1"/>
</dbReference>
<dbReference type="FunFam" id="1.10.1390.10:FF:000001">
    <property type="entry name" value="Glucose-6-phosphate isomerase"/>
    <property type="match status" value="1"/>
</dbReference>
<dbReference type="FunFam" id="3.40.50.10490:FF:000004">
    <property type="entry name" value="Glucose-6-phosphate isomerase"/>
    <property type="match status" value="1"/>
</dbReference>
<dbReference type="Gene3D" id="1.10.1390.10">
    <property type="match status" value="1"/>
</dbReference>
<dbReference type="Gene3D" id="3.40.50.10490">
    <property type="entry name" value="Glucose-6-phosphate isomerase like protein, domain 1"/>
    <property type="match status" value="2"/>
</dbReference>
<dbReference type="HAMAP" id="MF_00473">
    <property type="entry name" value="G6P_isomerase"/>
    <property type="match status" value="1"/>
</dbReference>
<dbReference type="InterPro" id="IPR001672">
    <property type="entry name" value="G6P_Isomerase"/>
</dbReference>
<dbReference type="InterPro" id="IPR023096">
    <property type="entry name" value="G6P_Isomerase_C"/>
</dbReference>
<dbReference type="InterPro" id="IPR018189">
    <property type="entry name" value="Phosphoglucose_isomerase_CS"/>
</dbReference>
<dbReference type="InterPro" id="IPR046348">
    <property type="entry name" value="SIS_dom_sf"/>
</dbReference>
<dbReference type="InterPro" id="IPR035476">
    <property type="entry name" value="SIS_PGI_1"/>
</dbReference>
<dbReference type="InterPro" id="IPR035482">
    <property type="entry name" value="SIS_PGI_2"/>
</dbReference>
<dbReference type="NCBIfam" id="NF001211">
    <property type="entry name" value="PRK00179.1"/>
    <property type="match status" value="1"/>
</dbReference>
<dbReference type="PANTHER" id="PTHR11469">
    <property type="entry name" value="GLUCOSE-6-PHOSPHATE ISOMERASE"/>
    <property type="match status" value="1"/>
</dbReference>
<dbReference type="PANTHER" id="PTHR11469:SF1">
    <property type="entry name" value="GLUCOSE-6-PHOSPHATE ISOMERASE"/>
    <property type="match status" value="1"/>
</dbReference>
<dbReference type="Pfam" id="PF00342">
    <property type="entry name" value="PGI"/>
    <property type="match status" value="1"/>
</dbReference>
<dbReference type="PRINTS" id="PR00662">
    <property type="entry name" value="G6PISOMERASE"/>
</dbReference>
<dbReference type="SUPFAM" id="SSF53697">
    <property type="entry name" value="SIS domain"/>
    <property type="match status" value="1"/>
</dbReference>
<dbReference type="PROSITE" id="PS00765">
    <property type="entry name" value="P_GLUCOSE_ISOMERASE_1"/>
    <property type="match status" value="1"/>
</dbReference>
<dbReference type="PROSITE" id="PS00174">
    <property type="entry name" value="P_GLUCOSE_ISOMERASE_2"/>
    <property type="match status" value="1"/>
</dbReference>
<dbReference type="PROSITE" id="PS51463">
    <property type="entry name" value="P_GLUCOSE_ISOMERASE_3"/>
    <property type="match status" value="1"/>
</dbReference>
<protein>
    <recommendedName>
        <fullName evidence="1">Glucose-6-phosphate isomerase 1</fullName>
        <shortName evidence="1">GPI 1</shortName>
        <ecNumber evidence="1">5.3.1.9</ecNumber>
    </recommendedName>
    <alternativeName>
        <fullName evidence="1">Phosphoglucose isomerase 1</fullName>
        <shortName evidence="1">PGI 1</shortName>
    </alternativeName>
    <alternativeName>
        <fullName evidence="1">Phosphohexose isomerase 1</fullName>
        <shortName evidence="1">PHI 1</shortName>
    </alternativeName>
</protein>
<reference key="1">
    <citation type="submission" date="2003-03" db="EMBL/GenBank/DDBJ databases">
        <title>The complete genome sequence of Neisseria gonorrhoeae.</title>
        <authorList>
            <person name="Lewis L.A."/>
            <person name="Gillaspy A.F."/>
            <person name="McLaughlin R.E."/>
            <person name="Gipson M."/>
            <person name="Ducey T.F."/>
            <person name="Ownbey T."/>
            <person name="Hartman K."/>
            <person name="Nydick C."/>
            <person name="Carson M.B."/>
            <person name="Vaughn J."/>
            <person name="Thomson C."/>
            <person name="Song L."/>
            <person name="Lin S."/>
            <person name="Yuan X."/>
            <person name="Najar F."/>
            <person name="Zhan M."/>
            <person name="Ren Q."/>
            <person name="Zhu H."/>
            <person name="Qi S."/>
            <person name="Kenton S.M."/>
            <person name="Lai H."/>
            <person name="White J.D."/>
            <person name="Clifton S."/>
            <person name="Roe B.A."/>
            <person name="Dyer D.W."/>
        </authorList>
    </citation>
    <scope>NUCLEOTIDE SEQUENCE [LARGE SCALE GENOMIC DNA]</scope>
    <source>
        <strain>ATCC 700825 / FA 1090</strain>
    </source>
</reference>
<evidence type="ECO:0000255" key="1">
    <source>
        <dbReference type="HAMAP-Rule" id="MF_00473"/>
    </source>
</evidence>